<sequence>MKYFGTDGIRGIFGETLTDELAFKVGKALGEIVGEGRVIVGKDTRVSGDSLEAAISAGLTSMGVDVLLCGIIPTPAVALLTRITRSFGVVISASHNPPEYNGIKVLKGGYKIPDEMEAEIEERLENGSFPPRLVVGRTKSFREGRDMYIGAVLEIFRDLDLTGEMVSLDLANGATTTTAKEVFEFLGAKVEVFNDSQDGLLINQGCGATHPRFLAEEMKNGKVGFTFDGDGDRVIAVDEERNVVNGDRIIGILAVGLKEEGRLNSDTVVGTVMTNGGLEDFLKEKGIKLLRTKVGDKYVLEKMLESGANLGGERSGHIIILDRSTTGDGLITALELMRVLRRSGRNLSDFAKEIPDYPQITKNVRRTERMSLENENLRKIVEESTSRGYRVVIRPSGTEPVIRITVEGKDREEIEKIVEEISRVLES</sequence>
<reference key="1">
    <citation type="journal article" date="2011" name="J. Bacteriol.">
        <title>Genome sequence of Thermotoga sp. strain RQ2, a hyperthermophilic bacterium isolated from a geothermally heated region of the seafloor near Ribeira Quente, the Azores.</title>
        <authorList>
            <person name="Swithers K.S."/>
            <person name="DiPippo J.L."/>
            <person name="Bruce D.C."/>
            <person name="Detter C."/>
            <person name="Tapia R."/>
            <person name="Han S."/>
            <person name="Saunders E."/>
            <person name="Goodwin L.A."/>
            <person name="Han J."/>
            <person name="Woyke T."/>
            <person name="Pitluck S."/>
            <person name="Pennacchio L."/>
            <person name="Nolan M."/>
            <person name="Mikhailova N."/>
            <person name="Lykidis A."/>
            <person name="Land M.L."/>
            <person name="Brettin T."/>
            <person name="Stetter K.O."/>
            <person name="Nelson K.E."/>
            <person name="Gogarten J.P."/>
            <person name="Noll K.M."/>
        </authorList>
    </citation>
    <scope>NUCLEOTIDE SEQUENCE [LARGE SCALE GENOMIC DNA]</scope>
    <source>
        <strain>RQ2</strain>
    </source>
</reference>
<proteinExistence type="inferred from homology"/>
<organism>
    <name type="scientific">Thermotoga sp. (strain RQ2)</name>
    <dbReference type="NCBI Taxonomy" id="126740"/>
    <lineage>
        <taxon>Bacteria</taxon>
        <taxon>Thermotogati</taxon>
        <taxon>Thermotogota</taxon>
        <taxon>Thermotogae</taxon>
        <taxon>Thermotogales</taxon>
        <taxon>Thermotogaceae</taxon>
        <taxon>Thermotoga</taxon>
    </lineage>
</organism>
<keyword id="KW-0413">Isomerase</keyword>
<keyword id="KW-0460">Magnesium</keyword>
<keyword id="KW-0479">Metal-binding</keyword>
<keyword id="KW-0597">Phosphoprotein</keyword>
<gene>
    <name evidence="1" type="primary">glmM</name>
    <name type="ordered locus">TRQ2_0764</name>
</gene>
<accession>B1L9W8</accession>
<dbReference type="EC" id="5.4.2.10" evidence="1"/>
<dbReference type="EMBL" id="CP000969">
    <property type="protein sequence ID" value="ACB09116.1"/>
    <property type="molecule type" value="Genomic_DNA"/>
</dbReference>
<dbReference type="SMR" id="B1L9W8"/>
<dbReference type="KEGG" id="trq:TRQ2_0764"/>
<dbReference type="HOGENOM" id="CLU_016950_7_0_0"/>
<dbReference type="Proteomes" id="UP000001687">
    <property type="component" value="Chromosome"/>
</dbReference>
<dbReference type="GO" id="GO:0005829">
    <property type="term" value="C:cytosol"/>
    <property type="evidence" value="ECO:0007669"/>
    <property type="project" value="TreeGrafter"/>
</dbReference>
<dbReference type="GO" id="GO:0000287">
    <property type="term" value="F:magnesium ion binding"/>
    <property type="evidence" value="ECO:0007669"/>
    <property type="project" value="UniProtKB-UniRule"/>
</dbReference>
<dbReference type="GO" id="GO:0008966">
    <property type="term" value="F:phosphoglucosamine mutase activity"/>
    <property type="evidence" value="ECO:0007669"/>
    <property type="project" value="UniProtKB-UniRule"/>
</dbReference>
<dbReference type="GO" id="GO:0004615">
    <property type="term" value="F:phosphomannomutase activity"/>
    <property type="evidence" value="ECO:0007669"/>
    <property type="project" value="TreeGrafter"/>
</dbReference>
<dbReference type="GO" id="GO:0005975">
    <property type="term" value="P:carbohydrate metabolic process"/>
    <property type="evidence" value="ECO:0007669"/>
    <property type="project" value="InterPro"/>
</dbReference>
<dbReference type="GO" id="GO:0009252">
    <property type="term" value="P:peptidoglycan biosynthetic process"/>
    <property type="evidence" value="ECO:0007669"/>
    <property type="project" value="TreeGrafter"/>
</dbReference>
<dbReference type="GO" id="GO:0006048">
    <property type="term" value="P:UDP-N-acetylglucosamine biosynthetic process"/>
    <property type="evidence" value="ECO:0007669"/>
    <property type="project" value="TreeGrafter"/>
</dbReference>
<dbReference type="CDD" id="cd05802">
    <property type="entry name" value="GlmM"/>
    <property type="match status" value="1"/>
</dbReference>
<dbReference type="FunFam" id="3.40.120.10:FF:000001">
    <property type="entry name" value="Phosphoglucosamine mutase"/>
    <property type="match status" value="1"/>
</dbReference>
<dbReference type="FunFam" id="3.40.120.10:FF:000002">
    <property type="entry name" value="Phosphoglucosamine mutase"/>
    <property type="match status" value="1"/>
</dbReference>
<dbReference type="Gene3D" id="3.40.120.10">
    <property type="entry name" value="Alpha-D-Glucose-1,6-Bisphosphate, subunit A, domain 3"/>
    <property type="match status" value="3"/>
</dbReference>
<dbReference type="Gene3D" id="3.30.310.50">
    <property type="entry name" value="Alpha-D-phosphohexomutase, C-terminal domain"/>
    <property type="match status" value="1"/>
</dbReference>
<dbReference type="HAMAP" id="MF_01554_B">
    <property type="entry name" value="GlmM_B"/>
    <property type="match status" value="1"/>
</dbReference>
<dbReference type="InterPro" id="IPR005844">
    <property type="entry name" value="A-D-PHexomutase_a/b/a-I"/>
</dbReference>
<dbReference type="InterPro" id="IPR016055">
    <property type="entry name" value="A-D-PHexomutase_a/b/a-I/II/III"/>
</dbReference>
<dbReference type="InterPro" id="IPR005845">
    <property type="entry name" value="A-D-PHexomutase_a/b/a-II"/>
</dbReference>
<dbReference type="InterPro" id="IPR005846">
    <property type="entry name" value="A-D-PHexomutase_a/b/a-III"/>
</dbReference>
<dbReference type="InterPro" id="IPR005843">
    <property type="entry name" value="A-D-PHexomutase_C"/>
</dbReference>
<dbReference type="InterPro" id="IPR036900">
    <property type="entry name" value="A-D-PHexomutase_C_sf"/>
</dbReference>
<dbReference type="InterPro" id="IPR016066">
    <property type="entry name" value="A-D-PHexomutase_CS"/>
</dbReference>
<dbReference type="InterPro" id="IPR005841">
    <property type="entry name" value="Alpha-D-phosphohexomutase_SF"/>
</dbReference>
<dbReference type="InterPro" id="IPR006352">
    <property type="entry name" value="GlmM_bact"/>
</dbReference>
<dbReference type="InterPro" id="IPR050060">
    <property type="entry name" value="Phosphoglucosamine_mutase"/>
</dbReference>
<dbReference type="NCBIfam" id="TIGR01455">
    <property type="entry name" value="glmM"/>
    <property type="match status" value="1"/>
</dbReference>
<dbReference type="PANTHER" id="PTHR42946:SF1">
    <property type="entry name" value="PHOSPHOGLUCOMUTASE (ALPHA-D-GLUCOSE-1,6-BISPHOSPHATE-DEPENDENT)"/>
    <property type="match status" value="1"/>
</dbReference>
<dbReference type="PANTHER" id="PTHR42946">
    <property type="entry name" value="PHOSPHOHEXOSE MUTASE"/>
    <property type="match status" value="1"/>
</dbReference>
<dbReference type="Pfam" id="PF02878">
    <property type="entry name" value="PGM_PMM_I"/>
    <property type="match status" value="1"/>
</dbReference>
<dbReference type="Pfam" id="PF02879">
    <property type="entry name" value="PGM_PMM_II"/>
    <property type="match status" value="1"/>
</dbReference>
<dbReference type="Pfam" id="PF02880">
    <property type="entry name" value="PGM_PMM_III"/>
    <property type="match status" value="1"/>
</dbReference>
<dbReference type="Pfam" id="PF00408">
    <property type="entry name" value="PGM_PMM_IV"/>
    <property type="match status" value="1"/>
</dbReference>
<dbReference type="PRINTS" id="PR00509">
    <property type="entry name" value="PGMPMM"/>
</dbReference>
<dbReference type="SUPFAM" id="SSF55957">
    <property type="entry name" value="Phosphoglucomutase, C-terminal domain"/>
    <property type="match status" value="1"/>
</dbReference>
<dbReference type="SUPFAM" id="SSF53738">
    <property type="entry name" value="Phosphoglucomutase, first 3 domains"/>
    <property type="match status" value="3"/>
</dbReference>
<dbReference type="PROSITE" id="PS00710">
    <property type="entry name" value="PGM_PMM"/>
    <property type="match status" value="1"/>
</dbReference>
<evidence type="ECO:0000255" key="1">
    <source>
        <dbReference type="HAMAP-Rule" id="MF_01554"/>
    </source>
</evidence>
<name>GLMM_THESQ</name>
<comment type="function">
    <text evidence="1">Catalyzes the conversion of glucosamine-6-phosphate to glucosamine-1-phosphate.</text>
</comment>
<comment type="catalytic activity">
    <reaction evidence="1">
        <text>alpha-D-glucosamine 1-phosphate = D-glucosamine 6-phosphate</text>
        <dbReference type="Rhea" id="RHEA:23424"/>
        <dbReference type="ChEBI" id="CHEBI:58516"/>
        <dbReference type="ChEBI" id="CHEBI:58725"/>
        <dbReference type="EC" id="5.4.2.10"/>
    </reaction>
</comment>
<comment type="cofactor">
    <cofactor evidence="1">
        <name>Mg(2+)</name>
        <dbReference type="ChEBI" id="CHEBI:18420"/>
    </cofactor>
    <text evidence="1">Binds 1 Mg(2+) ion per subunit.</text>
</comment>
<comment type="PTM">
    <text evidence="1">Activated by phosphorylation.</text>
</comment>
<comment type="similarity">
    <text evidence="1">Belongs to the phosphohexose mutase family.</text>
</comment>
<feature type="chain" id="PRO_0000343604" description="Phosphoglucosamine mutase">
    <location>
        <begin position="1"/>
        <end position="427"/>
    </location>
</feature>
<feature type="active site" description="Phosphoserine intermediate" evidence="1">
    <location>
        <position position="94"/>
    </location>
</feature>
<feature type="binding site" description="via phosphate group" evidence="1">
    <location>
        <position position="94"/>
    </location>
    <ligand>
        <name>Mg(2+)</name>
        <dbReference type="ChEBI" id="CHEBI:18420"/>
    </ligand>
</feature>
<feature type="binding site" evidence="1">
    <location>
        <position position="228"/>
    </location>
    <ligand>
        <name>Mg(2+)</name>
        <dbReference type="ChEBI" id="CHEBI:18420"/>
    </ligand>
</feature>
<feature type="binding site" evidence="1">
    <location>
        <position position="230"/>
    </location>
    <ligand>
        <name>Mg(2+)</name>
        <dbReference type="ChEBI" id="CHEBI:18420"/>
    </ligand>
</feature>
<feature type="binding site" evidence="1">
    <location>
        <position position="232"/>
    </location>
    <ligand>
        <name>Mg(2+)</name>
        <dbReference type="ChEBI" id="CHEBI:18420"/>
    </ligand>
</feature>
<feature type="modified residue" description="Phosphoserine" evidence="1">
    <location>
        <position position="94"/>
    </location>
</feature>
<protein>
    <recommendedName>
        <fullName evidence="1">Phosphoglucosamine mutase</fullName>
        <ecNumber evidence="1">5.4.2.10</ecNumber>
    </recommendedName>
</protein>